<reference key="1">
    <citation type="journal article" date="2004" name="Nat. Genet.">
        <title>Complete sequencing and characterization of 21,243 full-length human cDNAs.</title>
        <authorList>
            <person name="Ota T."/>
            <person name="Suzuki Y."/>
            <person name="Nishikawa T."/>
            <person name="Otsuki T."/>
            <person name="Sugiyama T."/>
            <person name="Irie R."/>
            <person name="Wakamatsu A."/>
            <person name="Hayashi K."/>
            <person name="Sato H."/>
            <person name="Nagai K."/>
            <person name="Kimura K."/>
            <person name="Makita H."/>
            <person name="Sekine M."/>
            <person name="Obayashi M."/>
            <person name="Nishi T."/>
            <person name="Shibahara T."/>
            <person name="Tanaka T."/>
            <person name="Ishii S."/>
            <person name="Yamamoto J."/>
            <person name="Saito K."/>
            <person name="Kawai Y."/>
            <person name="Isono Y."/>
            <person name="Nakamura Y."/>
            <person name="Nagahari K."/>
            <person name="Murakami K."/>
            <person name="Yasuda T."/>
            <person name="Iwayanagi T."/>
            <person name="Wagatsuma M."/>
            <person name="Shiratori A."/>
            <person name="Sudo H."/>
            <person name="Hosoiri T."/>
            <person name="Kaku Y."/>
            <person name="Kodaira H."/>
            <person name="Kondo H."/>
            <person name="Sugawara M."/>
            <person name="Takahashi M."/>
            <person name="Kanda K."/>
            <person name="Yokoi T."/>
            <person name="Furuya T."/>
            <person name="Kikkawa E."/>
            <person name="Omura Y."/>
            <person name="Abe K."/>
            <person name="Kamihara K."/>
            <person name="Katsuta N."/>
            <person name="Sato K."/>
            <person name="Tanikawa M."/>
            <person name="Yamazaki M."/>
            <person name="Ninomiya K."/>
            <person name="Ishibashi T."/>
            <person name="Yamashita H."/>
            <person name="Murakawa K."/>
            <person name="Fujimori K."/>
            <person name="Tanai H."/>
            <person name="Kimata M."/>
            <person name="Watanabe M."/>
            <person name="Hiraoka S."/>
            <person name="Chiba Y."/>
            <person name="Ishida S."/>
            <person name="Ono Y."/>
            <person name="Takiguchi S."/>
            <person name="Watanabe S."/>
            <person name="Yosida M."/>
            <person name="Hotuta T."/>
            <person name="Kusano J."/>
            <person name="Kanehori K."/>
            <person name="Takahashi-Fujii A."/>
            <person name="Hara H."/>
            <person name="Tanase T.-O."/>
            <person name="Nomura Y."/>
            <person name="Togiya S."/>
            <person name="Komai F."/>
            <person name="Hara R."/>
            <person name="Takeuchi K."/>
            <person name="Arita M."/>
            <person name="Imose N."/>
            <person name="Musashino K."/>
            <person name="Yuuki H."/>
            <person name="Oshima A."/>
            <person name="Sasaki N."/>
            <person name="Aotsuka S."/>
            <person name="Yoshikawa Y."/>
            <person name="Matsunawa H."/>
            <person name="Ichihara T."/>
            <person name="Shiohata N."/>
            <person name="Sano S."/>
            <person name="Moriya S."/>
            <person name="Momiyama H."/>
            <person name="Satoh N."/>
            <person name="Takami S."/>
            <person name="Terashima Y."/>
            <person name="Suzuki O."/>
            <person name="Nakagawa S."/>
            <person name="Senoh A."/>
            <person name="Mizoguchi H."/>
            <person name="Goto Y."/>
            <person name="Shimizu F."/>
            <person name="Wakebe H."/>
            <person name="Hishigaki H."/>
            <person name="Watanabe T."/>
            <person name="Sugiyama A."/>
            <person name="Takemoto M."/>
            <person name="Kawakami B."/>
            <person name="Yamazaki M."/>
            <person name="Watanabe K."/>
            <person name="Kumagai A."/>
            <person name="Itakura S."/>
            <person name="Fukuzumi Y."/>
            <person name="Fujimori Y."/>
            <person name="Komiyama M."/>
            <person name="Tashiro H."/>
            <person name="Tanigami A."/>
            <person name="Fujiwara T."/>
            <person name="Ono T."/>
            <person name="Yamada K."/>
            <person name="Fujii Y."/>
            <person name="Ozaki K."/>
            <person name="Hirao M."/>
            <person name="Ohmori Y."/>
            <person name="Kawabata A."/>
            <person name="Hikiji T."/>
            <person name="Kobatake N."/>
            <person name="Inagaki H."/>
            <person name="Ikema Y."/>
            <person name="Okamoto S."/>
            <person name="Okitani R."/>
            <person name="Kawakami T."/>
            <person name="Noguchi S."/>
            <person name="Itoh T."/>
            <person name="Shigeta K."/>
            <person name="Senba T."/>
            <person name="Matsumura K."/>
            <person name="Nakajima Y."/>
            <person name="Mizuno T."/>
            <person name="Morinaga M."/>
            <person name="Sasaki M."/>
            <person name="Togashi T."/>
            <person name="Oyama M."/>
            <person name="Hata H."/>
            <person name="Watanabe M."/>
            <person name="Komatsu T."/>
            <person name="Mizushima-Sugano J."/>
            <person name="Satoh T."/>
            <person name="Shirai Y."/>
            <person name="Takahashi Y."/>
            <person name="Nakagawa K."/>
            <person name="Okumura K."/>
            <person name="Nagase T."/>
            <person name="Nomura N."/>
            <person name="Kikuchi H."/>
            <person name="Masuho Y."/>
            <person name="Yamashita R."/>
            <person name="Nakai K."/>
            <person name="Yada T."/>
            <person name="Nakamura Y."/>
            <person name="Ohara O."/>
            <person name="Isogai T."/>
            <person name="Sugano S."/>
        </authorList>
    </citation>
    <scope>NUCLEOTIDE SEQUENCE [LARGE SCALE MRNA]</scope>
</reference>
<reference key="2">
    <citation type="journal article" date="2004" name="Nature">
        <title>The DNA sequence and comparative analysis of human chromosome 10.</title>
        <authorList>
            <person name="Deloukas P."/>
            <person name="Earthrowl M.E."/>
            <person name="Grafham D.V."/>
            <person name="Rubenfield M."/>
            <person name="French L."/>
            <person name="Steward C.A."/>
            <person name="Sims S.K."/>
            <person name="Jones M.C."/>
            <person name="Searle S."/>
            <person name="Scott C."/>
            <person name="Howe K."/>
            <person name="Hunt S.E."/>
            <person name="Andrews T.D."/>
            <person name="Gilbert J.G.R."/>
            <person name="Swarbreck D."/>
            <person name="Ashurst J.L."/>
            <person name="Taylor A."/>
            <person name="Battles J."/>
            <person name="Bird C.P."/>
            <person name="Ainscough R."/>
            <person name="Almeida J.P."/>
            <person name="Ashwell R.I.S."/>
            <person name="Ambrose K.D."/>
            <person name="Babbage A.K."/>
            <person name="Bagguley C.L."/>
            <person name="Bailey J."/>
            <person name="Banerjee R."/>
            <person name="Bates K."/>
            <person name="Beasley H."/>
            <person name="Bray-Allen S."/>
            <person name="Brown A.J."/>
            <person name="Brown J.Y."/>
            <person name="Burford D.C."/>
            <person name="Burrill W."/>
            <person name="Burton J."/>
            <person name="Cahill P."/>
            <person name="Camire D."/>
            <person name="Carter N.P."/>
            <person name="Chapman J.C."/>
            <person name="Clark S.Y."/>
            <person name="Clarke G."/>
            <person name="Clee C.M."/>
            <person name="Clegg S."/>
            <person name="Corby N."/>
            <person name="Coulson A."/>
            <person name="Dhami P."/>
            <person name="Dutta I."/>
            <person name="Dunn M."/>
            <person name="Faulkner L."/>
            <person name="Frankish A."/>
            <person name="Frankland J.A."/>
            <person name="Garner P."/>
            <person name="Garnett J."/>
            <person name="Gribble S."/>
            <person name="Griffiths C."/>
            <person name="Grocock R."/>
            <person name="Gustafson E."/>
            <person name="Hammond S."/>
            <person name="Harley J.L."/>
            <person name="Hart E."/>
            <person name="Heath P.D."/>
            <person name="Ho T.P."/>
            <person name="Hopkins B."/>
            <person name="Horne J."/>
            <person name="Howden P.J."/>
            <person name="Huckle E."/>
            <person name="Hynds C."/>
            <person name="Johnson C."/>
            <person name="Johnson D."/>
            <person name="Kana A."/>
            <person name="Kay M."/>
            <person name="Kimberley A.M."/>
            <person name="Kershaw J.K."/>
            <person name="Kokkinaki M."/>
            <person name="Laird G.K."/>
            <person name="Lawlor S."/>
            <person name="Lee H.M."/>
            <person name="Leongamornlert D.A."/>
            <person name="Laird G."/>
            <person name="Lloyd C."/>
            <person name="Lloyd D.M."/>
            <person name="Loveland J."/>
            <person name="Lovell J."/>
            <person name="McLaren S."/>
            <person name="McLay K.E."/>
            <person name="McMurray A."/>
            <person name="Mashreghi-Mohammadi M."/>
            <person name="Matthews L."/>
            <person name="Milne S."/>
            <person name="Nickerson T."/>
            <person name="Nguyen M."/>
            <person name="Overton-Larty E."/>
            <person name="Palmer S.A."/>
            <person name="Pearce A.V."/>
            <person name="Peck A.I."/>
            <person name="Pelan S."/>
            <person name="Phillimore B."/>
            <person name="Porter K."/>
            <person name="Rice C.M."/>
            <person name="Rogosin A."/>
            <person name="Ross M.T."/>
            <person name="Sarafidou T."/>
            <person name="Sehra H.K."/>
            <person name="Shownkeen R."/>
            <person name="Skuce C.D."/>
            <person name="Smith M."/>
            <person name="Standring L."/>
            <person name="Sycamore N."/>
            <person name="Tester J."/>
            <person name="Thorpe A."/>
            <person name="Torcasso W."/>
            <person name="Tracey A."/>
            <person name="Tromans A."/>
            <person name="Tsolas J."/>
            <person name="Wall M."/>
            <person name="Walsh J."/>
            <person name="Wang H."/>
            <person name="Weinstock K."/>
            <person name="West A.P."/>
            <person name="Willey D.L."/>
            <person name="Whitehead S.L."/>
            <person name="Wilming L."/>
            <person name="Wray P.W."/>
            <person name="Young L."/>
            <person name="Chen Y."/>
            <person name="Lovering R.C."/>
            <person name="Moschonas N.K."/>
            <person name="Siebert R."/>
            <person name="Fechtel K."/>
            <person name="Bentley D."/>
            <person name="Durbin R.M."/>
            <person name="Hubbard T."/>
            <person name="Doucette-Stamm L."/>
            <person name="Beck S."/>
            <person name="Smith D.R."/>
            <person name="Rogers J."/>
        </authorList>
    </citation>
    <scope>NUCLEOTIDE SEQUENCE [LARGE SCALE GENOMIC DNA]</scope>
</reference>
<reference key="3">
    <citation type="submission" date="2005-09" db="EMBL/GenBank/DDBJ databases">
        <authorList>
            <person name="Mural R.J."/>
            <person name="Istrail S."/>
            <person name="Sutton G.G."/>
            <person name="Florea L."/>
            <person name="Halpern A.L."/>
            <person name="Mobarry C.M."/>
            <person name="Lippert R."/>
            <person name="Walenz B."/>
            <person name="Shatkay H."/>
            <person name="Dew I."/>
            <person name="Miller J.R."/>
            <person name="Flanigan M.J."/>
            <person name="Edwards N.J."/>
            <person name="Bolanos R."/>
            <person name="Fasulo D."/>
            <person name="Halldorsson B.V."/>
            <person name="Hannenhalli S."/>
            <person name="Turner R."/>
            <person name="Yooseph S."/>
            <person name="Lu F."/>
            <person name="Nusskern D.R."/>
            <person name="Shue B.C."/>
            <person name="Zheng X.H."/>
            <person name="Zhong F."/>
            <person name="Delcher A.L."/>
            <person name="Huson D.H."/>
            <person name="Kravitz S.A."/>
            <person name="Mouchard L."/>
            <person name="Reinert K."/>
            <person name="Remington K.A."/>
            <person name="Clark A.G."/>
            <person name="Waterman M.S."/>
            <person name="Eichler E.E."/>
            <person name="Adams M.D."/>
            <person name="Hunkapiller M.W."/>
            <person name="Myers E.W."/>
            <person name="Venter J.C."/>
        </authorList>
    </citation>
    <scope>NUCLEOTIDE SEQUENCE [LARGE SCALE GENOMIC DNA]</scope>
</reference>
<reference key="4">
    <citation type="journal article" date="2004" name="Genome Res.">
        <title>The status, quality, and expansion of the NIH full-length cDNA project: the Mammalian Gene Collection (MGC).</title>
        <authorList>
            <consortium name="The MGC Project Team"/>
        </authorList>
    </citation>
    <scope>NUCLEOTIDE SEQUENCE [LARGE SCALE MRNA]</scope>
    <source>
        <tissue>B-cell</tissue>
    </source>
</reference>
<gene>
    <name type="primary">FAM204A</name>
    <name type="synonym">C10orf84</name>
</gene>
<evidence type="ECO:0000255" key="1"/>
<evidence type="ECO:0000256" key="2">
    <source>
        <dbReference type="SAM" id="MobiDB-lite"/>
    </source>
</evidence>
<evidence type="ECO:0000305" key="3"/>
<name>F204A_HUMAN</name>
<keyword id="KW-0175">Coiled coil</keyword>
<keyword id="KW-1267">Proteomics identification</keyword>
<keyword id="KW-1185">Reference proteome</keyword>
<sequence length="233" mass="27021">MWSGLLPPGLNESDAESNSEDEATLENSGLNLQEDKEDESIRKTEIIDFSTDEPKTETESNVNAYEECPSGIPIDMWNKFQELHKKHSEQKSTTSRFRGKRRKRSRKDKLKNEKELHSEPSSNETQWKELTQYFGVNDRFDPPVKRKKVEKSGLEKRIDQAVEEWNIEKAEELSNQLATRELGVKIAKAVACHNFVKAKKEVENSQAARKKKKLAWGFEAKKRWETKSNMGYM</sequence>
<feature type="chain" id="PRO_0000089808" description="Protein FAM204A">
    <location>
        <begin position="1"/>
        <end position="233"/>
    </location>
</feature>
<feature type="region of interest" description="Disordered" evidence="2">
    <location>
        <begin position="1"/>
        <end position="126"/>
    </location>
</feature>
<feature type="coiled-coil region" evidence="1">
    <location>
        <begin position="144"/>
        <end position="164"/>
    </location>
</feature>
<feature type="compositionally biased region" description="Acidic residues" evidence="2">
    <location>
        <begin position="13"/>
        <end position="24"/>
    </location>
</feature>
<feature type="compositionally biased region" description="Basic and acidic residues" evidence="2">
    <location>
        <begin position="39"/>
        <end position="58"/>
    </location>
</feature>
<feature type="compositionally biased region" description="Basic residues" evidence="2">
    <location>
        <begin position="97"/>
        <end position="109"/>
    </location>
</feature>
<feature type="sequence conflict" description="In Ref. 1; BAB15514." evidence="3" ref="1">
    <original>C</original>
    <variation>F</variation>
    <location>
        <position position="68"/>
    </location>
</feature>
<feature type="sequence conflict" description="In Ref. 1; BAB15514." evidence="3" ref="1">
    <original>H</original>
    <variation>R</variation>
    <location>
        <position position="84"/>
    </location>
</feature>
<comment type="interaction">
    <interactant intactId="EBI-8465160">
        <id>Q9H8W3</id>
    </interactant>
    <interactant intactId="EBI-701903">
        <id>Q14192</id>
        <label>FHL2</label>
    </interactant>
    <organismsDiffer>false</organismsDiffer>
    <experiments>3</experiments>
</comment>
<comment type="interaction">
    <interactant intactId="EBI-8465160">
        <id>Q9H8W3</id>
    </interactant>
    <interactant intactId="EBI-710124">
        <id>O60341</id>
        <label>KDM1A</label>
    </interactant>
    <organismsDiffer>false</organismsDiffer>
    <experiments>3</experiments>
</comment>
<comment type="interaction">
    <interactant intactId="EBI-8465160">
        <id>Q9H8W3</id>
    </interactant>
    <interactant intactId="EBI-8463848">
        <id>Q8NB12</id>
        <label>SMYD1</label>
    </interactant>
    <organismsDiffer>false</organismsDiffer>
    <experiments>4</experiments>
</comment>
<comment type="interaction">
    <interactant intactId="EBI-8465160">
        <id>Q9H8W3</id>
    </interactant>
    <interactant intactId="EBI-12023934">
        <id>Q5MJ10</id>
        <label>SPANXN2</label>
    </interactant>
    <organismsDiffer>false</organismsDiffer>
    <experiments>3</experiments>
</comment>
<accession>Q9H8W3</accession>
<accession>D3DRC6</accession>
<accession>Q5T373</accession>
<accession>Q9H5V5</accession>
<organism>
    <name type="scientific">Homo sapiens</name>
    <name type="common">Human</name>
    <dbReference type="NCBI Taxonomy" id="9606"/>
    <lineage>
        <taxon>Eukaryota</taxon>
        <taxon>Metazoa</taxon>
        <taxon>Chordata</taxon>
        <taxon>Craniata</taxon>
        <taxon>Vertebrata</taxon>
        <taxon>Euteleostomi</taxon>
        <taxon>Mammalia</taxon>
        <taxon>Eutheria</taxon>
        <taxon>Euarchontoglires</taxon>
        <taxon>Primates</taxon>
        <taxon>Haplorrhini</taxon>
        <taxon>Catarrhini</taxon>
        <taxon>Hominidae</taxon>
        <taxon>Homo</taxon>
    </lineage>
</organism>
<dbReference type="EMBL" id="AK023250">
    <property type="protein sequence ID" value="BAB14487.1"/>
    <property type="molecule type" value="mRNA"/>
</dbReference>
<dbReference type="EMBL" id="AK026630">
    <property type="protein sequence ID" value="BAB15514.1"/>
    <property type="molecule type" value="mRNA"/>
</dbReference>
<dbReference type="EMBL" id="AL365498">
    <property type="status" value="NOT_ANNOTATED_CDS"/>
    <property type="molecule type" value="Genomic_DNA"/>
</dbReference>
<dbReference type="EMBL" id="CH471066">
    <property type="protein sequence ID" value="EAW49417.1"/>
    <property type="molecule type" value="Genomic_DNA"/>
</dbReference>
<dbReference type="EMBL" id="CH471066">
    <property type="protein sequence ID" value="EAW49418.1"/>
    <property type="molecule type" value="Genomic_DNA"/>
</dbReference>
<dbReference type="EMBL" id="BC023577">
    <property type="protein sequence ID" value="AAH23577.1"/>
    <property type="molecule type" value="mRNA"/>
</dbReference>
<dbReference type="CCDS" id="CCDS7605.1"/>
<dbReference type="RefSeq" id="NP_001128144.1">
    <property type="nucleotide sequence ID" value="NM_001134672.2"/>
</dbReference>
<dbReference type="RefSeq" id="NP_071346.1">
    <property type="nucleotide sequence ID" value="NM_022063.3"/>
</dbReference>
<dbReference type="RefSeq" id="XP_047281575.1">
    <property type="nucleotide sequence ID" value="XM_047425619.1"/>
</dbReference>
<dbReference type="RefSeq" id="XP_054222502.1">
    <property type="nucleotide sequence ID" value="XM_054366527.1"/>
</dbReference>
<dbReference type="SMR" id="Q9H8W3"/>
<dbReference type="BioGRID" id="121970">
    <property type="interactions" value="25"/>
</dbReference>
<dbReference type="FunCoup" id="Q9H8W3">
    <property type="interactions" value="2046"/>
</dbReference>
<dbReference type="IntAct" id="Q9H8W3">
    <property type="interactions" value="12"/>
</dbReference>
<dbReference type="MINT" id="Q9H8W3"/>
<dbReference type="STRING" id="9606.ENSP00000358183"/>
<dbReference type="GlyGen" id="Q9H8W3">
    <property type="glycosylation" value="2 sites, 1 O-linked glycan (2 sites)"/>
</dbReference>
<dbReference type="iPTMnet" id="Q9H8W3"/>
<dbReference type="PhosphoSitePlus" id="Q9H8W3"/>
<dbReference type="BioMuta" id="FAM204A"/>
<dbReference type="DMDM" id="50400654"/>
<dbReference type="jPOST" id="Q9H8W3"/>
<dbReference type="MassIVE" id="Q9H8W3"/>
<dbReference type="PaxDb" id="9606-ENSP00000358183"/>
<dbReference type="PeptideAtlas" id="Q9H8W3"/>
<dbReference type="ProteomicsDB" id="81248"/>
<dbReference type="Pumba" id="Q9H8W3"/>
<dbReference type="Antibodypedia" id="49195">
    <property type="antibodies" value="27 antibodies from 11 providers"/>
</dbReference>
<dbReference type="DNASU" id="63877"/>
<dbReference type="Ensembl" id="ENST00000369172.8">
    <property type="protein sequence ID" value="ENSP00000358170.4"/>
    <property type="gene ID" value="ENSG00000165669.14"/>
</dbReference>
<dbReference type="Ensembl" id="ENST00000369183.9">
    <property type="protein sequence ID" value="ENSP00000358183.4"/>
    <property type="gene ID" value="ENSG00000165669.14"/>
</dbReference>
<dbReference type="GeneID" id="63877"/>
<dbReference type="KEGG" id="hsa:63877"/>
<dbReference type="MANE-Select" id="ENST00000369183.9">
    <property type="protein sequence ID" value="ENSP00000358183.4"/>
    <property type="RefSeq nucleotide sequence ID" value="NM_022063.3"/>
    <property type="RefSeq protein sequence ID" value="NP_071346.1"/>
</dbReference>
<dbReference type="UCSC" id="uc001ldo.3">
    <property type="organism name" value="human"/>
</dbReference>
<dbReference type="AGR" id="HGNC:25794"/>
<dbReference type="CTD" id="63877"/>
<dbReference type="GeneCards" id="FAM204A"/>
<dbReference type="HGNC" id="HGNC:25794">
    <property type="gene designation" value="FAM204A"/>
</dbReference>
<dbReference type="HPA" id="ENSG00000165669">
    <property type="expression patterns" value="Low tissue specificity"/>
</dbReference>
<dbReference type="neXtProt" id="NX_Q9H8W3"/>
<dbReference type="OpenTargets" id="ENSG00000165669"/>
<dbReference type="PharmGKB" id="PA134910767"/>
<dbReference type="VEuPathDB" id="HostDB:ENSG00000165669"/>
<dbReference type="eggNOG" id="ENOG502S9J9">
    <property type="taxonomic scope" value="Eukaryota"/>
</dbReference>
<dbReference type="GeneTree" id="ENSGT00390000008978"/>
<dbReference type="HOGENOM" id="CLU_102986_0_0_1"/>
<dbReference type="InParanoid" id="Q9H8W3"/>
<dbReference type="OMA" id="REKHWKE"/>
<dbReference type="OrthoDB" id="2418792at2759"/>
<dbReference type="PAN-GO" id="Q9H8W3">
    <property type="GO annotations" value="0 GO annotations based on evolutionary models"/>
</dbReference>
<dbReference type="PhylomeDB" id="Q9H8W3"/>
<dbReference type="TreeFam" id="TF328607"/>
<dbReference type="PathwayCommons" id="Q9H8W3"/>
<dbReference type="SignaLink" id="Q9H8W3"/>
<dbReference type="BioGRID-ORCS" id="63877">
    <property type="hits" value="72 hits in 1156 CRISPR screens"/>
</dbReference>
<dbReference type="CD-CODE" id="91857CE7">
    <property type="entry name" value="Nucleolus"/>
</dbReference>
<dbReference type="ChiTaRS" id="FAM204A">
    <property type="organism name" value="human"/>
</dbReference>
<dbReference type="GenomeRNAi" id="63877"/>
<dbReference type="Pharos" id="Q9H8W3">
    <property type="development level" value="Tdark"/>
</dbReference>
<dbReference type="PRO" id="PR:Q9H8W3"/>
<dbReference type="Proteomes" id="UP000005640">
    <property type="component" value="Chromosome 10"/>
</dbReference>
<dbReference type="RNAct" id="Q9H8W3">
    <property type="molecule type" value="protein"/>
</dbReference>
<dbReference type="Bgee" id="ENSG00000165669">
    <property type="expression patterns" value="Expressed in calcaneal tendon and 183 other cell types or tissues"/>
</dbReference>
<dbReference type="ExpressionAtlas" id="Q9H8W3">
    <property type="expression patterns" value="baseline and differential"/>
</dbReference>
<dbReference type="InterPro" id="IPR037690">
    <property type="entry name" value="FAM204A"/>
</dbReference>
<dbReference type="PANTHER" id="PTHR14386">
    <property type="entry name" value="PROTEIN FAM204A"/>
    <property type="match status" value="1"/>
</dbReference>
<dbReference type="PANTHER" id="PTHR14386:SF2">
    <property type="entry name" value="PROTEIN FAM204A"/>
    <property type="match status" value="1"/>
</dbReference>
<proteinExistence type="evidence at protein level"/>
<protein>
    <recommendedName>
        <fullName>Protein FAM204A</fullName>
    </recommendedName>
</protein>